<proteinExistence type="evidence at protein level"/>
<reference key="1">
    <citation type="journal article" date="2005" name="Science">
        <title>The transcriptional landscape of the mammalian genome.</title>
        <authorList>
            <person name="Carninci P."/>
            <person name="Kasukawa T."/>
            <person name="Katayama S."/>
            <person name="Gough J."/>
            <person name="Frith M.C."/>
            <person name="Maeda N."/>
            <person name="Oyama R."/>
            <person name="Ravasi T."/>
            <person name="Lenhard B."/>
            <person name="Wells C."/>
            <person name="Kodzius R."/>
            <person name="Shimokawa K."/>
            <person name="Bajic V.B."/>
            <person name="Brenner S.E."/>
            <person name="Batalov S."/>
            <person name="Forrest A.R."/>
            <person name="Zavolan M."/>
            <person name="Davis M.J."/>
            <person name="Wilming L.G."/>
            <person name="Aidinis V."/>
            <person name="Allen J.E."/>
            <person name="Ambesi-Impiombato A."/>
            <person name="Apweiler R."/>
            <person name="Aturaliya R.N."/>
            <person name="Bailey T.L."/>
            <person name="Bansal M."/>
            <person name="Baxter L."/>
            <person name="Beisel K.W."/>
            <person name="Bersano T."/>
            <person name="Bono H."/>
            <person name="Chalk A.M."/>
            <person name="Chiu K.P."/>
            <person name="Choudhary V."/>
            <person name="Christoffels A."/>
            <person name="Clutterbuck D.R."/>
            <person name="Crowe M.L."/>
            <person name="Dalla E."/>
            <person name="Dalrymple B.P."/>
            <person name="de Bono B."/>
            <person name="Della Gatta G."/>
            <person name="di Bernardo D."/>
            <person name="Down T."/>
            <person name="Engstrom P."/>
            <person name="Fagiolini M."/>
            <person name="Faulkner G."/>
            <person name="Fletcher C.F."/>
            <person name="Fukushima T."/>
            <person name="Furuno M."/>
            <person name="Futaki S."/>
            <person name="Gariboldi M."/>
            <person name="Georgii-Hemming P."/>
            <person name="Gingeras T.R."/>
            <person name="Gojobori T."/>
            <person name="Green R.E."/>
            <person name="Gustincich S."/>
            <person name="Harbers M."/>
            <person name="Hayashi Y."/>
            <person name="Hensch T.K."/>
            <person name="Hirokawa N."/>
            <person name="Hill D."/>
            <person name="Huminiecki L."/>
            <person name="Iacono M."/>
            <person name="Ikeo K."/>
            <person name="Iwama A."/>
            <person name="Ishikawa T."/>
            <person name="Jakt M."/>
            <person name="Kanapin A."/>
            <person name="Katoh M."/>
            <person name="Kawasawa Y."/>
            <person name="Kelso J."/>
            <person name="Kitamura H."/>
            <person name="Kitano H."/>
            <person name="Kollias G."/>
            <person name="Krishnan S.P."/>
            <person name="Kruger A."/>
            <person name="Kummerfeld S.K."/>
            <person name="Kurochkin I.V."/>
            <person name="Lareau L.F."/>
            <person name="Lazarevic D."/>
            <person name="Lipovich L."/>
            <person name="Liu J."/>
            <person name="Liuni S."/>
            <person name="McWilliam S."/>
            <person name="Madan Babu M."/>
            <person name="Madera M."/>
            <person name="Marchionni L."/>
            <person name="Matsuda H."/>
            <person name="Matsuzawa S."/>
            <person name="Miki H."/>
            <person name="Mignone F."/>
            <person name="Miyake S."/>
            <person name="Morris K."/>
            <person name="Mottagui-Tabar S."/>
            <person name="Mulder N."/>
            <person name="Nakano N."/>
            <person name="Nakauchi H."/>
            <person name="Ng P."/>
            <person name="Nilsson R."/>
            <person name="Nishiguchi S."/>
            <person name="Nishikawa S."/>
            <person name="Nori F."/>
            <person name="Ohara O."/>
            <person name="Okazaki Y."/>
            <person name="Orlando V."/>
            <person name="Pang K.C."/>
            <person name="Pavan W.J."/>
            <person name="Pavesi G."/>
            <person name="Pesole G."/>
            <person name="Petrovsky N."/>
            <person name="Piazza S."/>
            <person name="Reed J."/>
            <person name="Reid J.F."/>
            <person name="Ring B.Z."/>
            <person name="Ringwald M."/>
            <person name="Rost B."/>
            <person name="Ruan Y."/>
            <person name="Salzberg S.L."/>
            <person name="Sandelin A."/>
            <person name="Schneider C."/>
            <person name="Schoenbach C."/>
            <person name="Sekiguchi K."/>
            <person name="Semple C.A."/>
            <person name="Seno S."/>
            <person name="Sessa L."/>
            <person name="Sheng Y."/>
            <person name="Shibata Y."/>
            <person name="Shimada H."/>
            <person name="Shimada K."/>
            <person name="Silva D."/>
            <person name="Sinclair B."/>
            <person name="Sperling S."/>
            <person name="Stupka E."/>
            <person name="Sugiura K."/>
            <person name="Sultana R."/>
            <person name="Takenaka Y."/>
            <person name="Taki K."/>
            <person name="Tammoja K."/>
            <person name="Tan S.L."/>
            <person name="Tang S."/>
            <person name="Taylor M.S."/>
            <person name="Tegner J."/>
            <person name="Teichmann S.A."/>
            <person name="Ueda H.R."/>
            <person name="van Nimwegen E."/>
            <person name="Verardo R."/>
            <person name="Wei C.L."/>
            <person name="Yagi K."/>
            <person name="Yamanishi H."/>
            <person name="Zabarovsky E."/>
            <person name="Zhu S."/>
            <person name="Zimmer A."/>
            <person name="Hide W."/>
            <person name="Bult C."/>
            <person name="Grimmond S.M."/>
            <person name="Teasdale R.D."/>
            <person name="Liu E.T."/>
            <person name="Brusic V."/>
            <person name="Quackenbush J."/>
            <person name="Wahlestedt C."/>
            <person name="Mattick J.S."/>
            <person name="Hume D.A."/>
            <person name="Kai C."/>
            <person name="Sasaki D."/>
            <person name="Tomaru Y."/>
            <person name="Fukuda S."/>
            <person name="Kanamori-Katayama M."/>
            <person name="Suzuki M."/>
            <person name="Aoki J."/>
            <person name="Arakawa T."/>
            <person name="Iida J."/>
            <person name="Imamura K."/>
            <person name="Itoh M."/>
            <person name="Kato T."/>
            <person name="Kawaji H."/>
            <person name="Kawagashira N."/>
            <person name="Kawashima T."/>
            <person name="Kojima M."/>
            <person name="Kondo S."/>
            <person name="Konno H."/>
            <person name="Nakano K."/>
            <person name="Ninomiya N."/>
            <person name="Nishio T."/>
            <person name="Okada M."/>
            <person name="Plessy C."/>
            <person name="Shibata K."/>
            <person name="Shiraki T."/>
            <person name="Suzuki S."/>
            <person name="Tagami M."/>
            <person name="Waki K."/>
            <person name="Watahiki A."/>
            <person name="Okamura-Oho Y."/>
            <person name="Suzuki H."/>
            <person name="Kawai J."/>
            <person name="Hayashizaki Y."/>
        </authorList>
    </citation>
    <scope>NUCLEOTIDE SEQUENCE [LARGE SCALE MRNA] (ISOFORM 1)</scope>
    <source>
        <strain>C57BL/6J</strain>
        <tissue>Embryo</tissue>
        <tissue>Eye</tissue>
    </source>
</reference>
<reference key="2">
    <citation type="journal article" date="2004" name="Genome Res.">
        <title>The status, quality, and expansion of the NIH full-length cDNA project: the Mammalian Gene Collection (MGC).</title>
        <authorList>
            <consortium name="The MGC Project Team"/>
        </authorList>
    </citation>
    <scope>NUCLEOTIDE SEQUENCE [LARGE SCALE MRNA] (ISOFORMS 1; 2 AND 3)</scope>
    <source>
        <strain>FVB/N</strain>
        <tissue>Colon</tissue>
        <tissue>Eye</tissue>
        <tissue>Liver</tissue>
        <tissue>Mammary tumor</tissue>
    </source>
</reference>
<reference key="3">
    <citation type="journal article" date="2010" name="Cell">
        <title>A tissue-specific atlas of mouse protein phosphorylation and expression.</title>
        <authorList>
            <person name="Huttlin E.L."/>
            <person name="Jedrychowski M.P."/>
            <person name="Elias J.E."/>
            <person name="Goswami T."/>
            <person name="Rad R."/>
            <person name="Beausoleil S.A."/>
            <person name="Villen J."/>
            <person name="Haas W."/>
            <person name="Sowa M.E."/>
            <person name="Gygi S.P."/>
        </authorList>
    </citation>
    <scope>IDENTIFICATION BY MASS SPECTROMETRY [LARGE SCALE ANALYSIS]</scope>
    <source>
        <tissue>Liver</tissue>
        <tissue>Lung</tissue>
        <tissue>Pancreas</tissue>
        <tissue>Spleen</tissue>
    </source>
</reference>
<comment type="function">
    <text evidence="1">Critical mediator, in cooperation with CASP4, of endoplasmic reticulum-stress induced apoptosis. Required or the activation of CASP4 following endoplasmic reticulum stress (By similarity).</text>
</comment>
<comment type="subunit">
    <text evidence="1">Constitutively interacts with CASP4; required for the localization of procaspase 4 to the ER.</text>
</comment>
<comment type="subcellular location">
    <subcellularLocation>
        <location evidence="1">Endoplasmic reticulum membrane</location>
        <topology evidence="1">Multi-pass membrane protein</topology>
    </subcellularLocation>
</comment>
<comment type="alternative products">
    <event type="alternative splicing"/>
    <isoform>
        <id>Q8BM55-1</id>
        <name>1</name>
        <sequence type="displayed"/>
    </isoform>
    <isoform>
        <id>Q8BM55-2</id>
        <name>2</name>
        <sequence type="described" ref="VSP_031817"/>
    </isoform>
    <isoform>
        <id>Q8BM55-3</id>
        <name>3</name>
        <sequence type="described" ref="VSP_031816"/>
    </isoform>
</comment>
<comment type="similarity">
    <text evidence="6">Belongs to the TMEM214 family.</text>
</comment>
<comment type="sequence caution" evidence="6">
    <conflict type="erroneous initiation">
        <sequence resource="EMBL-CDS" id="AAH22142"/>
    </conflict>
</comment>
<comment type="sequence caution" evidence="6">
    <conflict type="erroneous initiation">
        <sequence resource="EMBL-CDS" id="AAH26651"/>
    </conflict>
</comment>
<keyword id="KW-0007">Acetylation</keyword>
<keyword id="KW-0025">Alternative splicing</keyword>
<keyword id="KW-0053">Apoptosis</keyword>
<keyword id="KW-0256">Endoplasmic reticulum</keyword>
<keyword id="KW-0325">Glycoprotein</keyword>
<keyword id="KW-0472">Membrane</keyword>
<keyword id="KW-1185">Reference proteome</keyword>
<keyword id="KW-0812">Transmembrane</keyword>
<keyword id="KW-1133">Transmembrane helix</keyword>
<organism>
    <name type="scientific">Mus musculus</name>
    <name type="common">Mouse</name>
    <dbReference type="NCBI Taxonomy" id="10090"/>
    <lineage>
        <taxon>Eukaryota</taxon>
        <taxon>Metazoa</taxon>
        <taxon>Chordata</taxon>
        <taxon>Craniata</taxon>
        <taxon>Vertebrata</taxon>
        <taxon>Euteleostomi</taxon>
        <taxon>Mammalia</taxon>
        <taxon>Eutheria</taxon>
        <taxon>Euarchontoglires</taxon>
        <taxon>Glires</taxon>
        <taxon>Rodentia</taxon>
        <taxon>Myomorpha</taxon>
        <taxon>Muroidea</taxon>
        <taxon>Muridae</taxon>
        <taxon>Murinae</taxon>
        <taxon>Mus</taxon>
        <taxon>Mus</taxon>
    </lineage>
</organism>
<name>TM214_MOUSE</name>
<accession>Q8BM55</accession>
<accession>Q3TLH3</accession>
<accession>Q3UPX9</accession>
<accession>Q78HK3</accession>
<accession>Q8R0D5</accession>
<accession>Q8R237</accession>
<accession>Q8VC05</accession>
<evidence type="ECO:0000250" key="1"/>
<evidence type="ECO:0000250" key="2">
    <source>
        <dbReference type="UniProtKB" id="Q6NUQ4"/>
    </source>
</evidence>
<evidence type="ECO:0000255" key="3"/>
<evidence type="ECO:0000256" key="4">
    <source>
        <dbReference type="SAM" id="MobiDB-lite"/>
    </source>
</evidence>
<evidence type="ECO:0000303" key="5">
    <source>
    </source>
</evidence>
<evidence type="ECO:0000305" key="6"/>
<sequence>MAARSAGSGGWEVVKRGRRPGASSGGRGGGGGSDRRALGEANGVLKYDLSSPIQTTSTLYERGFEKIMKRQNKEQVPPPAAESKKPINKKQPKKVTAVPSQNQKQGPFRRLEDALKALDVAALQKELDKSQSVFTGNPSVWLKDLASYLNYKLQTPRMEPTLSQYPHDYPYSLVSRELRGIIRGLLTKAAGSVELFFDHCLFTMLQELDKTPGESLHGYRICIQAVLQDKPKIVTSNLDKFLELLRSHQSRPAKCLTIMWALGQAGFTNLTEGLKVWLGIMLPVLGIKALSPFAIAYLDRLLLMHPNLTKGFGMIGPKDFFPLLDFAYMPNNSLSPSLQEQLCQLFPRLKVLAFGAKPESSLHTYFPSFLSRATPSCPAAMKKELLASLTQCLTVDPLSTSVWRQLYPKHLSQSSLLLEHLLKSWEHIPKKARKSLQETIQSLKVTNQELLKKGSGGSEHVLTCDTACKGLLQRARGPRPPWARLFLLLLVFAVGFLCHDLRSNSSLQASLTGRLLRSSGLLPVGQQVCARLSSYSLQSYNWLQETLPACGSHLLAVVQPSLQLAWTHIYAIFSFLSAHCASYLACFSDSLAGFFQRVQLPEALQQLFHALKELLLLFCHSVLLPTWHLLLAALAQVQEHCHEACRGDVTWDCIKTQLSRAAQWTWLCLQDVTVAFLDWALTMISQQ</sequence>
<feature type="initiator methionine" description="Removed" evidence="2">
    <location>
        <position position="1"/>
    </location>
</feature>
<feature type="chain" id="PRO_0000321898" description="Transmembrane protein 214">
    <location>
        <begin position="2"/>
        <end position="687"/>
    </location>
</feature>
<feature type="transmembrane region" description="Helical" evidence="3">
    <location>
        <begin position="481"/>
        <end position="501"/>
    </location>
</feature>
<feature type="transmembrane region" description="Helical" evidence="3">
    <location>
        <begin position="614"/>
        <end position="634"/>
    </location>
</feature>
<feature type="region of interest" description="Disordered" evidence="4">
    <location>
        <begin position="1"/>
        <end position="38"/>
    </location>
</feature>
<feature type="region of interest" description="Disordered" evidence="4">
    <location>
        <begin position="70"/>
        <end position="108"/>
    </location>
</feature>
<feature type="compositionally biased region" description="Gly residues" evidence="4">
    <location>
        <begin position="23"/>
        <end position="32"/>
    </location>
</feature>
<feature type="modified residue" description="N-acetylalanine" evidence="2">
    <location>
        <position position="2"/>
    </location>
</feature>
<feature type="glycosylation site" description="N-linked (GlcNAc...) asparagine" evidence="3">
    <location>
        <position position="269"/>
    </location>
</feature>
<feature type="glycosylation site" description="N-linked (GlcNAc...) asparagine" evidence="3">
    <location>
        <position position="307"/>
    </location>
</feature>
<feature type="splice variant" id="VSP_031816" description="In isoform 3." evidence="5">
    <location>
        <begin position="1"/>
        <end position="313"/>
    </location>
</feature>
<feature type="splice variant" id="VSP_031817" description="In isoform 2." evidence="5">
    <location>
        <begin position="1"/>
        <end position="303"/>
    </location>
</feature>
<feature type="sequence conflict" description="In Ref. 1; BAE38819." evidence="6" ref="1">
    <original>S</original>
    <variation>G</variation>
    <location>
        <position position="33"/>
    </location>
</feature>
<feature type="sequence conflict" description="In Ref. 1; BAE25265." evidence="6" ref="1">
    <original>G</original>
    <variation>R</variation>
    <location>
        <position position="180"/>
    </location>
</feature>
<feature type="sequence conflict" description="In Ref. 1; BAE38819." evidence="6" ref="1">
    <original>S</original>
    <variation>N</variation>
    <location>
        <position position="376"/>
    </location>
</feature>
<feature type="sequence conflict" description="In Ref. 1; BAE38819." evidence="6" ref="1">
    <original>V</original>
    <variation>I</variation>
    <location>
        <position position="395"/>
    </location>
</feature>
<feature type="sequence conflict" description="In Ref. 1; BAE38819." evidence="6" ref="1">
    <original>G</original>
    <variation>S</variation>
    <location>
        <position position="456"/>
    </location>
</feature>
<feature type="sequence conflict" description="In Ref. 1; BAE38819." evidence="6" ref="1">
    <original>L</original>
    <variation>F</variation>
    <location>
        <position position="658"/>
    </location>
</feature>
<feature type="sequence conflict" description="In Ref. 1; BAE25265." evidence="6" ref="1">
    <original>Q</original>
    <variation>H</variation>
    <location>
        <position position="670"/>
    </location>
</feature>
<protein>
    <recommendedName>
        <fullName>Transmembrane protein 214</fullName>
    </recommendedName>
</protein>
<dbReference type="EMBL" id="AK143078">
    <property type="protein sequence ID" value="BAE25265.1"/>
    <property type="molecule type" value="mRNA"/>
</dbReference>
<dbReference type="EMBL" id="AK166510">
    <property type="protein sequence ID" value="BAE38819.1"/>
    <property type="molecule type" value="mRNA"/>
</dbReference>
<dbReference type="EMBL" id="AK034883">
    <property type="protein sequence ID" value="BAC28866.1"/>
    <property type="molecule type" value="mRNA"/>
</dbReference>
<dbReference type="EMBL" id="BC022602">
    <property type="protein sequence ID" value="AAH22602.1"/>
    <property type="molecule type" value="mRNA"/>
</dbReference>
<dbReference type="EMBL" id="BC022142">
    <property type="protein sequence ID" value="AAH22142.1"/>
    <property type="status" value="ALT_INIT"/>
    <property type="molecule type" value="mRNA"/>
</dbReference>
<dbReference type="EMBL" id="BC026651">
    <property type="protein sequence ID" value="AAH26651.1"/>
    <property type="status" value="ALT_INIT"/>
    <property type="molecule type" value="mRNA"/>
</dbReference>
<dbReference type="EMBL" id="BC027046">
    <property type="protein sequence ID" value="AAH27046.1"/>
    <property type="molecule type" value="mRNA"/>
</dbReference>
<dbReference type="EMBL" id="BC029150">
    <property type="protein sequence ID" value="AAH29150.3"/>
    <property type="molecule type" value="mRNA"/>
</dbReference>
<dbReference type="CCDS" id="CCDS19164.1">
    <molecule id="Q8BM55-1"/>
</dbReference>
<dbReference type="RefSeq" id="NP_653108.2">
    <molecule id="Q8BM55-1"/>
    <property type="nucleotide sequence ID" value="NM_144525.3"/>
</dbReference>
<dbReference type="RefSeq" id="XP_006504153.1">
    <property type="nucleotide sequence ID" value="XM_006504090.1"/>
</dbReference>
<dbReference type="RefSeq" id="XP_017176576.1">
    <property type="nucleotide sequence ID" value="XM_017321087.1"/>
</dbReference>
<dbReference type="RefSeq" id="XP_036021359.1">
    <molecule id="Q8BM55-2"/>
    <property type="nucleotide sequence ID" value="XM_036165466.1"/>
</dbReference>
<dbReference type="BioGRID" id="213055">
    <property type="interactions" value="4"/>
</dbReference>
<dbReference type="FunCoup" id="Q8BM55">
    <property type="interactions" value="2661"/>
</dbReference>
<dbReference type="IntAct" id="Q8BM55">
    <property type="interactions" value="1"/>
</dbReference>
<dbReference type="STRING" id="10090.ENSMUSP00000144615"/>
<dbReference type="GlyCosmos" id="Q8BM55">
    <property type="glycosylation" value="2 sites, No reported glycans"/>
</dbReference>
<dbReference type="GlyGen" id="Q8BM55">
    <property type="glycosylation" value="3 sites, 1 O-linked glycan (1 site)"/>
</dbReference>
<dbReference type="iPTMnet" id="Q8BM55"/>
<dbReference type="PhosphoSitePlus" id="Q8BM55"/>
<dbReference type="SwissPalm" id="Q8BM55"/>
<dbReference type="jPOST" id="Q8BM55"/>
<dbReference type="PaxDb" id="10090-ENSMUSP00000037484"/>
<dbReference type="PeptideAtlas" id="Q8BM55"/>
<dbReference type="ProteomicsDB" id="259222">
    <molecule id="Q8BM55-1"/>
</dbReference>
<dbReference type="ProteomicsDB" id="259223">
    <molecule id="Q8BM55-2"/>
</dbReference>
<dbReference type="ProteomicsDB" id="259224">
    <molecule id="Q8BM55-3"/>
</dbReference>
<dbReference type="Pumba" id="Q8BM55"/>
<dbReference type="Antibodypedia" id="28071">
    <property type="antibodies" value="124 antibodies from 25 providers"/>
</dbReference>
<dbReference type="DNASU" id="68796"/>
<dbReference type="Ensembl" id="ENSMUST00000201203.4">
    <molecule id="Q8BM55-1"/>
    <property type="protein sequence ID" value="ENSMUSP00000144615.2"/>
    <property type="gene ID" value="ENSMUSG00000038828.14"/>
</dbReference>
<dbReference type="GeneID" id="68796"/>
<dbReference type="KEGG" id="mmu:68796"/>
<dbReference type="UCSC" id="uc008wwa.1">
    <molecule id="Q8BM55-1"/>
    <property type="organism name" value="mouse"/>
</dbReference>
<dbReference type="AGR" id="MGI:1916046"/>
<dbReference type="CTD" id="54867"/>
<dbReference type="MGI" id="MGI:1916046">
    <property type="gene designation" value="Tmem214"/>
</dbReference>
<dbReference type="VEuPathDB" id="HostDB:ENSMUSG00000038828"/>
<dbReference type="eggNOG" id="KOG4467">
    <property type="taxonomic scope" value="Eukaryota"/>
</dbReference>
<dbReference type="GeneTree" id="ENSGT00390000002693"/>
<dbReference type="HOGENOM" id="CLU_025330_1_0_1"/>
<dbReference type="InParanoid" id="Q8BM55"/>
<dbReference type="OMA" id="NGSAGKW"/>
<dbReference type="OrthoDB" id="10022292at2759"/>
<dbReference type="PhylomeDB" id="Q8BM55"/>
<dbReference type="TreeFam" id="TF329489"/>
<dbReference type="BioGRID-ORCS" id="68796">
    <property type="hits" value="3 hits in 79 CRISPR screens"/>
</dbReference>
<dbReference type="CD-CODE" id="CE726F99">
    <property type="entry name" value="Postsynaptic density"/>
</dbReference>
<dbReference type="ChiTaRS" id="Tmem214">
    <property type="organism name" value="mouse"/>
</dbReference>
<dbReference type="PRO" id="PR:Q8BM55"/>
<dbReference type="Proteomes" id="UP000000589">
    <property type="component" value="Chromosome 5"/>
</dbReference>
<dbReference type="RNAct" id="Q8BM55">
    <property type="molecule type" value="protein"/>
</dbReference>
<dbReference type="Bgee" id="ENSMUSG00000038828">
    <property type="expression patterns" value="Expressed in lacrimal gland and 251 other cell types or tissues"/>
</dbReference>
<dbReference type="ExpressionAtlas" id="Q8BM55">
    <property type="expression patterns" value="baseline and differential"/>
</dbReference>
<dbReference type="GO" id="GO:0005881">
    <property type="term" value="C:cytoplasmic microtubule"/>
    <property type="evidence" value="ECO:0000250"/>
    <property type="project" value="UniProtKB"/>
</dbReference>
<dbReference type="GO" id="GO:0005829">
    <property type="term" value="C:cytosol"/>
    <property type="evidence" value="ECO:0007669"/>
    <property type="project" value="Ensembl"/>
</dbReference>
<dbReference type="GO" id="GO:0005789">
    <property type="term" value="C:endoplasmic reticulum membrane"/>
    <property type="evidence" value="ECO:0007669"/>
    <property type="project" value="UniProtKB-SubCell"/>
</dbReference>
<dbReference type="GO" id="GO:0005794">
    <property type="term" value="C:Golgi apparatus"/>
    <property type="evidence" value="ECO:0007669"/>
    <property type="project" value="Ensembl"/>
</dbReference>
<dbReference type="GO" id="GO:0006915">
    <property type="term" value="P:apoptotic process"/>
    <property type="evidence" value="ECO:0007669"/>
    <property type="project" value="UniProtKB-KW"/>
</dbReference>
<dbReference type="InterPro" id="IPR019308">
    <property type="entry name" value="TMEM214"/>
</dbReference>
<dbReference type="PANTHER" id="PTHR13448">
    <property type="entry name" value="TRANSMEMBRANE PROTEIN 214"/>
    <property type="match status" value="1"/>
</dbReference>
<dbReference type="PANTHER" id="PTHR13448:SF0">
    <property type="entry name" value="TRANSMEMBRANE PROTEIN 214"/>
    <property type="match status" value="1"/>
</dbReference>
<dbReference type="Pfam" id="PF10151">
    <property type="entry name" value="TMEM214"/>
    <property type="match status" value="1"/>
</dbReference>
<gene>
    <name type="primary">Tmem214</name>
</gene>